<protein>
    <recommendedName>
        <fullName evidence="1">Protoheme IX farnesyltransferase</fullName>
        <ecNumber evidence="1">2.5.1.141</ecNumber>
    </recommendedName>
    <alternativeName>
        <fullName evidence="1">Heme B farnesyltransferase</fullName>
    </alternativeName>
    <alternativeName>
        <fullName evidence="1">Heme O synthase</fullName>
    </alternativeName>
</protein>
<reference key="1">
    <citation type="journal article" date="2004" name="Proc. Natl. Acad. Sci. U.S.A.">
        <title>Genomic plasticity of the causative agent of melioidosis, Burkholderia pseudomallei.</title>
        <authorList>
            <person name="Holden M.T.G."/>
            <person name="Titball R.W."/>
            <person name="Peacock S.J."/>
            <person name="Cerdeno-Tarraga A.-M."/>
            <person name="Atkins T."/>
            <person name="Crossman L.C."/>
            <person name="Pitt T."/>
            <person name="Churcher C."/>
            <person name="Mungall K.L."/>
            <person name="Bentley S.D."/>
            <person name="Sebaihia M."/>
            <person name="Thomson N.R."/>
            <person name="Bason N."/>
            <person name="Beacham I.R."/>
            <person name="Brooks K."/>
            <person name="Brown K.A."/>
            <person name="Brown N.F."/>
            <person name="Challis G.L."/>
            <person name="Cherevach I."/>
            <person name="Chillingworth T."/>
            <person name="Cronin A."/>
            <person name="Crossett B."/>
            <person name="Davis P."/>
            <person name="DeShazer D."/>
            <person name="Feltwell T."/>
            <person name="Fraser A."/>
            <person name="Hance Z."/>
            <person name="Hauser H."/>
            <person name="Holroyd S."/>
            <person name="Jagels K."/>
            <person name="Keith K.E."/>
            <person name="Maddison M."/>
            <person name="Moule S."/>
            <person name="Price C."/>
            <person name="Quail M.A."/>
            <person name="Rabbinowitsch E."/>
            <person name="Rutherford K."/>
            <person name="Sanders M."/>
            <person name="Simmonds M."/>
            <person name="Songsivilai S."/>
            <person name="Stevens K."/>
            <person name="Tumapa S."/>
            <person name="Vesaratchavest M."/>
            <person name="Whitehead S."/>
            <person name="Yeats C."/>
            <person name="Barrell B.G."/>
            <person name="Oyston P.C.F."/>
            <person name="Parkhill J."/>
        </authorList>
    </citation>
    <scope>NUCLEOTIDE SEQUENCE [LARGE SCALE GENOMIC DNA]</scope>
    <source>
        <strain>K96243</strain>
    </source>
</reference>
<name>COXX_BURPS</name>
<dbReference type="EC" id="2.5.1.141" evidence="1"/>
<dbReference type="EMBL" id="BX571965">
    <property type="protein sequence ID" value="CAH34451.1"/>
    <property type="molecule type" value="Genomic_DNA"/>
</dbReference>
<dbReference type="RefSeq" id="YP_107088.1">
    <property type="nucleotide sequence ID" value="NC_006350.1"/>
</dbReference>
<dbReference type="SMR" id="Q63XS7"/>
<dbReference type="STRING" id="272560.BPSL0462"/>
<dbReference type="KEGG" id="bps:BPSL0462"/>
<dbReference type="PATRIC" id="fig|272560.51.peg.1194"/>
<dbReference type="eggNOG" id="COG0109">
    <property type="taxonomic scope" value="Bacteria"/>
</dbReference>
<dbReference type="UniPathway" id="UPA00834">
    <property type="reaction ID" value="UER00712"/>
</dbReference>
<dbReference type="Proteomes" id="UP000000605">
    <property type="component" value="Chromosome 1"/>
</dbReference>
<dbReference type="GO" id="GO:0005886">
    <property type="term" value="C:plasma membrane"/>
    <property type="evidence" value="ECO:0007669"/>
    <property type="project" value="UniProtKB-SubCell"/>
</dbReference>
<dbReference type="GO" id="GO:0008495">
    <property type="term" value="F:protoheme IX farnesyltransferase activity"/>
    <property type="evidence" value="ECO:0007669"/>
    <property type="project" value="UniProtKB-UniRule"/>
</dbReference>
<dbReference type="GO" id="GO:0048034">
    <property type="term" value="P:heme O biosynthetic process"/>
    <property type="evidence" value="ECO:0007669"/>
    <property type="project" value="UniProtKB-UniRule"/>
</dbReference>
<dbReference type="CDD" id="cd13957">
    <property type="entry name" value="PT_UbiA_Cox10"/>
    <property type="match status" value="1"/>
</dbReference>
<dbReference type="Gene3D" id="1.10.357.140">
    <property type="entry name" value="UbiA prenyltransferase"/>
    <property type="match status" value="1"/>
</dbReference>
<dbReference type="HAMAP" id="MF_00154">
    <property type="entry name" value="CyoE_CtaB"/>
    <property type="match status" value="1"/>
</dbReference>
<dbReference type="InterPro" id="IPR006369">
    <property type="entry name" value="Protohaem_IX_farnesylTrfase"/>
</dbReference>
<dbReference type="InterPro" id="IPR000537">
    <property type="entry name" value="UbiA_prenyltransferase"/>
</dbReference>
<dbReference type="InterPro" id="IPR030470">
    <property type="entry name" value="UbiA_prenylTrfase_CS"/>
</dbReference>
<dbReference type="InterPro" id="IPR044878">
    <property type="entry name" value="UbiA_sf"/>
</dbReference>
<dbReference type="NCBIfam" id="TIGR01473">
    <property type="entry name" value="cyoE_ctaB"/>
    <property type="match status" value="1"/>
</dbReference>
<dbReference type="NCBIfam" id="NF003349">
    <property type="entry name" value="PRK04375.1-2"/>
    <property type="match status" value="1"/>
</dbReference>
<dbReference type="PANTHER" id="PTHR43448:SF7">
    <property type="entry name" value="4-HYDROXYBENZOATE SOLANESYLTRANSFERASE"/>
    <property type="match status" value="1"/>
</dbReference>
<dbReference type="PANTHER" id="PTHR43448">
    <property type="entry name" value="PROTOHEME IX FARNESYLTRANSFERASE, MITOCHONDRIAL"/>
    <property type="match status" value="1"/>
</dbReference>
<dbReference type="Pfam" id="PF01040">
    <property type="entry name" value="UbiA"/>
    <property type="match status" value="1"/>
</dbReference>
<dbReference type="PROSITE" id="PS00943">
    <property type="entry name" value="UBIA"/>
    <property type="match status" value="1"/>
</dbReference>
<comment type="function">
    <text evidence="1">Converts heme B (protoheme IX) to heme O by substitution of the vinyl group on carbon 2 of heme B porphyrin ring with a hydroxyethyl farnesyl side group.</text>
</comment>
<comment type="catalytic activity">
    <reaction evidence="1">
        <text>heme b + (2E,6E)-farnesyl diphosphate + H2O = Fe(II)-heme o + diphosphate</text>
        <dbReference type="Rhea" id="RHEA:28070"/>
        <dbReference type="ChEBI" id="CHEBI:15377"/>
        <dbReference type="ChEBI" id="CHEBI:33019"/>
        <dbReference type="ChEBI" id="CHEBI:60344"/>
        <dbReference type="ChEBI" id="CHEBI:60530"/>
        <dbReference type="ChEBI" id="CHEBI:175763"/>
        <dbReference type="EC" id="2.5.1.141"/>
    </reaction>
</comment>
<comment type="pathway">
    <text evidence="1">Porphyrin-containing compound metabolism; heme O biosynthesis; heme O from protoheme: step 1/1.</text>
</comment>
<comment type="subcellular location">
    <subcellularLocation>
        <location evidence="1">Cell inner membrane</location>
        <topology evidence="1">Multi-pass membrane protein</topology>
    </subcellularLocation>
</comment>
<comment type="miscellaneous">
    <text evidence="1">Carbon 2 of the heme B porphyrin ring is defined according to the Fischer nomenclature.</text>
</comment>
<comment type="similarity">
    <text evidence="1">Belongs to the UbiA prenyltransferase family. Protoheme IX farnesyltransferase subfamily.</text>
</comment>
<evidence type="ECO:0000255" key="1">
    <source>
        <dbReference type="HAMAP-Rule" id="MF_00154"/>
    </source>
</evidence>
<sequence>MDTTLSHTPGSRLSQYLALTKPRVTQLAVFCAVIGMFLATPGMVPWKVLLGGTIGIGLLAGSAFAINCLVEQKIDAMMRRTAWRPSARGEITTLQILAFSTVLGGLGAWTLYTFTNPLTMWLTIATFVGYAVIYTLLLKPMTPQNIVIGGASGAMPPALGWAAVTGAVPGDAWILVLIIFVWTPPHFWVLALYRRKDYENAGLPMLPVTHGEQFTRLHILLYTVILFAVTMMPFISGMSGAVYLTSAVLLGALFLAYAWKIYRDYSDALARRAFRYSIVYLSLLFAALLVDHYARPVIGM</sequence>
<proteinExistence type="inferred from homology"/>
<keyword id="KW-0997">Cell inner membrane</keyword>
<keyword id="KW-1003">Cell membrane</keyword>
<keyword id="KW-0350">Heme biosynthesis</keyword>
<keyword id="KW-0472">Membrane</keyword>
<keyword id="KW-1185">Reference proteome</keyword>
<keyword id="KW-0808">Transferase</keyword>
<keyword id="KW-0812">Transmembrane</keyword>
<keyword id="KW-1133">Transmembrane helix</keyword>
<gene>
    <name evidence="1" type="primary">ctaB</name>
    <name type="ordered locus">BPSL0462</name>
</gene>
<feature type="chain" id="PRO_0000327028" description="Protoheme IX farnesyltransferase">
    <location>
        <begin position="1"/>
        <end position="300"/>
    </location>
</feature>
<feature type="transmembrane region" description="Helical" evidence="1">
    <location>
        <begin position="24"/>
        <end position="44"/>
    </location>
</feature>
<feature type="transmembrane region" description="Helical" evidence="1">
    <location>
        <begin position="48"/>
        <end position="68"/>
    </location>
</feature>
<feature type="transmembrane region" description="Helical" evidence="1">
    <location>
        <begin position="94"/>
        <end position="114"/>
    </location>
</feature>
<feature type="transmembrane region" description="Helical" evidence="1">
    <location>
        <begin position="118"/>
        <end position="138"/>
    </location>
</feature>
<feature type="transmembrane region" description="Helical" evidence="1">
    <location>
        <begin position="146"/>
        <end position="166"/>
    </location>
</feature>
<feature type="transmembrane region" description="Helical" evidence="1">
    <location>
        <begin position="172"/>
        <end position="192"/>
    </location>
</feature>
<feature type="transmembrane region" description="Helical" evidence="1">
    <location>
        <begin position="217"/>
        <end position="237"/>
    </location>
</feature>
<feature type="transmembrane region" description="Helical" evidence="1">
    <location>
        <begin position="239"/>
        <end position="259"/>
    </location>
</feature>
<feature type="transmembrane region" description="Helical" evidence="1">
    <location>
        <begin position="278"/>
        <end position="298"/>
    </location>
</feature>
<organism>
    <name type="scientific">Burkholderia pseudomallei (strain K96243)</name>
    <dbReference type="NCBI Taxonomy" id="272560"/>
    <lineage>
        <taxon>Bacteria</taxon>
        <taxon>Pseudomonadati</taxon>
        <taxon>Pseudomonadota</taxon>
        <taxon>Betaproteobacteria</taxon>
        <taxon>Burkholderiales</taxon>
        <taxon>Burkholderiaceae</taxon>
        <taxon>Burkholderia</taxon>
        <taxon>pseudomallei group</taxon>
    </lineage>
</organism>
<accession>Q63XS7</accession>